<comment type="function">
    <text evidence="1">Regulatory peptide encoded by the primary transcript (pri-miR164a) of the microRNA miR164a that enhances the accumulation of its corresponding mature miRNA. Acts probably as a transcriptional activator of its corresponding pri-miRNA.</text>
</comment>
<keyword id="KW-0010">Activator</keyword>
<keyword id="KW-1185">Reference proteome</keyword>
<keyword id="KW-0804">Transcription</keyword>
<keyword id="KW-0805">Transcription regulation</keyword>
<proteinExistence type="predicted"/>
<reference key="1">
    <citation type="journal article" date="1999" name="Nature">
        <title>Sequence and analysis of chromosome 2 of the plant Arabidopsis thaliana.</title>
        <authorList>
            <person name="Lin X."/>
            <person name="Kaul S."/>
            <person name="Rounsley S.D."/>
            <person name="Shea T.P."/>
            <person name="Benito M.-I."/>
            <person name="Town C.D."/>
            <person name="Fujii C.Y."/>
            <person name="Mason T.M."/>
            <person name="Bowman C.L."/>
            <person name="Barnstead M.E."/>
            <person name="Feldblyum T.V."/>
            <person name="Buell C.R."/>
            <person name="Ketchum K.A."/>
            <person name="Lee J.J."/>
            <person name="Ronning C.M."/>
            <person name="Koo H.L."/>
            <person name="Moffat K.S."/>
            <person name="Cronin L.A."/>
            <person name="Shen M."/>
            <person name="Pai G."/>
            <person name="Van Aken S."/>
            <person name="Umayam L."/>
            <person name="Tallon L.J."/>
            <person name="Gill J.E."/>
            <person name="Adams M.D."/>
            <person name="Carrera A.J."/>
            <person name="Creasy T.H."/>
            <person name="Goodman H.M."/>
            <person name="Somerville C.R."/>
            <person name="Copenhaver G.P."/>
            <person name="Preuss D."/>
            <person name="Nierman W.C."/>
            <person name="White O."/>
            <person name="Eisen J.A."/>
            <person name="Salzberg S.L."/>
            <person name="Fraser C.M."/>
            <person name="Venter J.C."/>
        </authorList>
    </citation>
    <scope>NUCLEOTIDE SEQUENCE [LARGE SCALE GENOMIC DNA]</scope>
    <source>
        <strain>cv. Columbia</strain>
    </source>
</reference>
<reference key="2">
    <citation type="journal article" date="2017" name="Plant J.">
        <title>Araport11: a complete reannotation of the Arabidopsis thaliana reference genome.</title>
        <authorList>
            <person name="Cheng C.Y."/>
            <person name="Krishnakumar V."/>
            <person name="Chan A.P."/>
            <person name="Thibaud-Nissen F."/>
            <person name="Schobel S."/>
            <person name="Town C.D."/>
        </authorList>
    </citation>
    <scope>GENOME REANNOTATION</scope>
    <source>
        <strain>cv. Columbia</strain>
    </source>
</reference>
<reference key="3">
    <citation type="journal article" date="2015" name="Nature">
        <title>Primary transcripts of microRNAs encode regulatory peptides.</title>
        <authorList>
            <person name="Lauressergues D."/>
            <person name="Couzigou J.M."/>
            <person name="Clemente H.S."/>
            <person name="Martinez Y."/>
            <person name="Dunand C."/>
            <person name="Becard G."/>
            <person name="Combier J.P."/>
        </authorList>
    </citation>
    <scope>IDENTIFICATION</scope>
    <scope>FUNCTION</scope>
    <source>
        <strain>cv. Columbia</strain>
    </source>
</reference>
<evidence type="ECO:0000269" key="1">
    <source>
    </source>
</evidence>
<evidence type="ECO:0000303" key="2">
    <source>
    </source>
</evidence>
<evidence type="ECO:0000305" key="3"/>
<evidence type="ECO:0000312" key="4">
    <source>
        <dbReference type="EMBL" id="AC002535"/>
    </source>
</evidence>
<organism>
    <name type="scientific">Arabidopsis thaliana</name>
    <name type="common">Mouse-ear cress</name>
    <dbReference type="NCBI Taxonomy" id="3702"/>
    <lineage>
        <taxon>Eukaryota</taxon>
        <taxon>Viridiplantae</taxon>
        <taxon>Streptophyta</taxon>
        <taxon>Embryophyta</taxon>
        <taxon>Tracheophyta</taxon>
        <taxon>Spermatophyta</taxon>
        <taxon>Magnoliopsida</taxon>
        <taxon>eudicotyledons</taxon>
        <taxon>Gunneridae</taxon>
        <taxon>Pentapetalae</taxon>
        <taxon>rosids</taxon>
        <taxon>malvids</taxon>
        <taxon>Brassicales</taxon>
        <taxon>Brassicaceae</taxon>
        <taxon>Camelineae</taxon>
        <taxon>Arabidopsis</taxon>
    </lineage>
</organism>
<sequence>MPSWHGMVLLPYVKHTHASTHTHTHNIYGCACELVFH</sequence>
<protein>
    <recommendedName>
        <fullName evidence="2">Peptide encoded by miPEP164a</fullName>
    </recommendedName>
</protein>
<name>P164A_ARATH</name>
<feature type="peptide" id="PRO_0000433201" description="Peptide encoded by miPEP164a">
    <location>
        <begin position="1"/>
        <end position="37"/>
    </location>
</feature>
<dbReference type="EMBL" id="AC002535">
    <property type="status" value="NOT_ANNOTATED_CDS"/>
    <property type="molecule type" value="Genomic_DNA"/>
</dbReference>
<dbReference type="EMBL" id="CP002685">
    <property type="status" value="NOT_ANNOTATED_CDS"/>
    <property type="molecule type" value="Genomic_DNA"/>
</dbReference>
<dbReference type="Araport" id="AT2G47584"/>
<dbReference type="TAIR" id="AT2G47584"/>
<dbReference type="InParanoid" id="P0DKJ1"/>
<dbReference type="PRO" id="PR:P0DKJ1"/>
<dbReference type="Proteomes" id="UP000006548">
    <property type="component" value="Chromosome 2"/>
</dbReference>
<dbReference type="GO" id="GO:1902895">
    <property type="term" value="P:positive regulation of miRNA transcription"/>
    <property type="evidence" value="ECO:0000314"/>
    <property type="project" value="GO_Central"/>
</dbReference>
<accession>P0DKJ1</accession>
<gene>
    <name evidence="2" type="primary">miPEP164a</name>
    <name evidence="3" type="ordered locus">At2g47584</name>
    <name evidence="4" type="ORF">T30B22</name>
</gene>